<protein>
    <recommendedName>
        <fullName evidence="1">Acetylglutamate kinase</fullName>
        <ecNumber evidence="1">2.7.2.8</ecNumber>
    </recommendedName>
    <alternativeName>
        <fullName evidence="1">N-acetyl-L-glutamate 5-phosphotransferase</fullName>
    </alternativeName>
    <alternativeName>
        <fullName evidence="1">NAG kinase</fullName>
        <shortName evidence="1">NAGK</shortName>
    </alternativeName>
</protein>
<keyword id="KW-0028">Amino-acid biosynthesis</keyword>
<keyword id="KW-0055">Arginine biosynthesis</keyword>
<keyword id="KW-0067">ATP-binding</keyword>
<keyword id="KW-0963">Cytoplasm</keyword>
<keyword id="KW-0418">Kinase</keyword>
<keyword id="KW-0547">Nucleotide-binding</keyword>
<keyword id="KW-1185">Reference proteome</keyword>
<keyword id="KW-0808">Transferase</keyword>
<proteinExistence type="inferred from homology"/>
<comment type="function">
    <text evidence="1">Catalyzes the ATP-dependent phosphorylation of N-acetyl-L-glutamate.</text>
</comment>
<comment type="catalytic activity">
    <reaction evidence="1">
        <text>N-acetyl-L-glutamate + ATP = N-acetyl-L-glutamyl 5-phosphate + ADP</text>
        <dbReference type="Rhea" id="RHEA:14629"/>
        <dbReference type="ChEBI" id="CHEBI:30616"/>
        <dbReference type="ChEBI" id="CHEBI:44337"/>
        <dbReference type="ChEBI" id="CHEBI:57936"/>
        <dbReference type="ChEBI" id="CHEBI:456216"/>
        <dbReference type="EC" id="2.7.2.8"/>
    </reaction>
</comment>
<comment type="pathway">
    <text evidence="1">Amino-acid biosynthesis; L-arginine biosynthesis; N(2)-acetyl-L-ornithine from L-glutamate: step 2/4.</text>
</comment>
<comment type="subcellular location">
    <subcellularLocation>
        <location evidence="1">Cytoplasm</location>
    </subcellularLocation>
</comment>
<comment type="similarity">
    <text evidence="1">Belongs to the acetylglutamate kinase family. ArgB subfamily.</text>
</comment>
<feature type="chain" id="PRO_0000112679" description="Acetylglutamate kinase">
    <location>
        <begin position="1"/>
        <end position="299"/>
    </location>
</feature>
<feature type="binding site" evidence="1">
    <location>
        <begin position="70"/>
        <end position="71"/>
    </location>
    <ligand>
        <name>substrate</name>
    </ligand>
</feature>
<feature type="binding site" evidence="1">
    <location>
        <position position="92"/>
    </location>
    <ligand>
        <name>substrate</name>
    </ligand>
</feature>
<feature type="binding site" evidence="1">
    <location>
        <position position="186"/>
    </location>
    <ligand>
        <name>substrate</name>
    </ligand>
</feature>
<feature type="site" description="Transition state stabilizer" evidence="1">
    <location>
        <position position="35"/>
    </location>
</feature>
<feature type="site" description="Transition state stabilizer" evidence="1">
    <location>
        <position position="249"/>
    </location>
</feature>
<sequence>MIRKEKFGDEILKAHILVEALPYIKKFSGKTVVIKYGGSAMLDCNLKKMVMQDVVLMKFVGLNPVIVHGGGPEISSFLKKLGIESKFVNGLRVTDEKTAEIVEMVLVGKINKEIVSMINELGGMAVGISGKDGKLLKAEKDLSNGDLGYVGKIVEVNIEVIEMLIDRGYIPVIAPVSFGDDGKTYNVNADTAAGKIAEALKAEKLILLTDVEGVLENVEDKTSLISRMDLEHAKKLMDSGRINGGMIPKLKCCIKAVENGVKRAHIIDGRLTHSLLLEIFTDEGIGTMIGKECFDDDNL</sequence>
<name>ARGB_CALS4</name>
<accession>Q8R7C0</accession>
<organism>
    <name type="scientific">Caldanaerobacter subterraneus subsp. tengcongensis (strain DSM 15242 / JCM 11007 / NBRC 100824 / MB4)</name>
    <name type="common">Thermoanaerobacter tengcongensis</name>
    <dbReference type="NCBI Taxonomy" id="273068"/>
    <lineage>
        <taxon>Bacteria</taxon>
        <taxon>Bacillati</taxon>
        <taxon>Bacillota</taxon>
        <taxon>Clostridia</taxon>
        <taxon>Thermoanaerobacterales</taxon>
        <taxon>Thermoanaerobacteraceae</taxon>
        <taxon>Caldanaerobacter</taxon>
    </lineage>
</organism>
<evidence type="ECO:0000255" key="1">
    <source>
        <dbReference type="HAMAP-Rule" id="MF_00082"/>
    </source>
</evidence>
<gene>
    <name evidence="1" type="primary">argB</name>
    <name type="ordered locus">TTE2496</name>
</gene>
<dbReference type="EC" id="2.7.2.8" evidence="1"/>
<dbReference type="EMBL" id="AE008691">
    <property type="protein sequence ID" value="AAM25626.1"/>
    <property type="molecule type" value="Genomic_DNA"/>
</dbReference>
<dbReference type="RefSeq" id="WP_009609716.1">
    <property type="nucleotide sequence ID" value="NC_003869.1"/>
</dbReference>
<dbReference type="SMR" id="Q8R7C0"/>
<dbReference type="STRING" id="273068.TTE2496"/>
<dbReference type="KEGG" id="tte:TTE2496"/>
<dbReference type="eggNOG" id="COG0548">
    <property type="taxonomic scope" value="Bacteria"/>
</dbReference>
<dbReference type="HOGENOM" id="CLU_053680_0_0_9"/>
<dbReference type="OrthoDB" id="9803155at2"/>
<dbReference type="UniPathway" id="UPA00068">
    <property type="reaction ID" value="UER00107"/>
</dbReference>
<dbReference type="Proteomes" id="UP000000555">
    <property type="component" value="Chromosome"/>
</dbReference>
<dbReference type="GO" id="GO:0005737">
    <property type="term" value="C:cytoplasm"/>
    <property type="evidence" value="ECO:0007669"/>
    <property type="project" value="UniProtKB-SubCell"/>
</dbReference>
<dbReference type="GO" id="GO:0003991">
    <property type="term" value="F:acetylglutamate kinase activity"/>
    <property type="evidence" value="ECO:0007669"/>
    <property type="project" value="UniProtKB-UniRule"/>
</dbReference>
<dbReference type="GO" id="GO:0005524">
    <property type="term" value="F:ATP binding"/>
    <property type="evidence" value="ECO:0007669"/>
    <property type="project" value="UniProtKB-UniRule"/>
</dbReference>
<dbReference type="GO" id="GO:0042450">
    <property type="term" value="P:arginine biosynthetic process via ornithine"/>
    <property type="evidence" value="ECO:0007669"/>
    <property type="project" value="UniProtKB-UniRule"/>
</dbReference>
<dbReference type="GO" id="GO:0006526">
    <property type="term" value="P:L-arginine biosynthetic process"/>
    <property type="evidence" value="ECO:0007669"/>
    <property type="project" value="UniProtKB-UniPathway"/>
</dbReference>
<dbReference type="CDD" id="cd04250">
    <property type="entry name" value="AAK_NAGK-C"/>
    <property type="match status" value="1"/>
</dbReference>
<dbReference type="FunFam" id="3.40.1160.10:FF:000004">
    <property type="entry name" value="Acetylglutamate kinase"/>
    <property type="match status" value="1"/>
</dbReference>
<dbReference type="Gene3D" id="3.40.1160.10">
    <property type="entry name" value="Acetylglutamate kinase-like"/>
    <property type="match status" value="1"/>
</dbReference>
<dbReference type="HAMAP" id="MF_00082">
    <property type="entry name" value="ArgB"/>
    <property type="match status" value="1"/>
</dbReference>
<dbReference type="InterPro" id="IPR036393">
    <property type="entry name" value="AceGlu_kinase-like_sf"/>
</dbReference>
<dbReference type="InterPro" id="IPR004662">
    <property type="entry name" value="AcgluKinase_fam"/>
</dbReference>
<dbReference type="InterPro" id="IPR037528">
    <property type="entry name" value="ArgB"/>
</dbReference>
<dbReference type="InterPro" id="IPR001048">
    <property type="entry name" value="Asp/Glu/Uridylate_kinase"/>
</dbReference>
<dbReference type="InterPro" id="IPR041727">
    <property type="entry name" value="NAGK-C"/>
</dbReference>
<dbReference type="NCBIfam" id="TIGR00761">
    <property type="entry name" value="argB"/>
    <property type="match status" value="1"/>
</dbReference>
<dbReference type="PANTHER" id="PTHR23342">
    <property type="entry name" value="N-ACETYLGLUTAMATE SYNTHASE"/>
    <property type="match status" value="1"/>
</dbReference>
<dbReference type="PANTHER" id="PTHR23342:SF0">
    <property type="entry name" value="N-ACETYLGLUTAMATE SYNTHASE, MITOCHONDRIAL"/>
    <property type="match status" value="1"/>
</dbReference>
<dbReference type="Pfam" id="PF00696">
    <property type="entry name" value="AA_kinase"/>
    <property type="match status" value="1"/>
</dbReference>
<dbReference type="PIRSF" id="PIRSF000728">
    <property type="entry name" value="NAGK"/>
    <property type="match status" value="1"/>
</dbReference>
<dbReference type="PRINTS" id="PR01469">
    <property type="entry name" value="CARBMTKINASE"/>
</dbReference>
<dbReference type="SUPFAM" id="SSF53633">
    <property type="entry name" value="Carbamate kinase-like"/>
    <property type="match status" value="1"/>
</dbReference>
<reference key="1">
    <citation type="journal article" date="2002" name="Genome Res.">
        <title>A complete sequence of the T. tengcongensis genome.</title>
        <authorList>
            <person name="Bao Q."/>
            <person name="Tian Y."/>
            <person name="Li W."/>
            <person name="Xu Z."/>
            <person name="Xuan Z."/>
            <person name="Hu S."/>
            <person name="Dong W."/>
            <person name="Yang J."/>
            <person name="Chen Y."/>
            <person name="Xue Y."/>
            <person name="Xu Y."/>
            <person name="Lai X."/>
            <person name="Huang L."/>
            <person name="Dong X."/>
            <person name="Ma Y."/>
            <person name="Ling L."/>
            <person name="Tan H."/>
            <person name="Chen R."/>
            <person name="Wang J."/>
            <person name="Yu J."/>
            <person name="Yang H."/>
        </authorList>
    </citation>
    <scope>NUCLEOTIDE SEQUENCE [LARGE SCALE GENOMIC DNA]</scope>
    <source>
        <strain>DSM 15242 / JCM 11007 / NBRC 100824 / MB4</strain>
    </source>
</reference>